<accession>P50814</accession>
<accession>Q80913</accession>
<proteinExistence type="inferred from homology"/>
<organism>
    <name type="scientific">Human papillomavirus 38</name>
    <dbReference type="NCBI Taxonomy" id="37959"/>
    <lineage>
        <taxon>Viruses</taxon>
        <taxon>Monodnaviria</taxon>
        <taxon>Shotokuvirae</taxon>
        <taxon>Cossaviricota</taxon>
        <taxon>Papovaviricetes</taxon>
        <taxon>Zurhausenvirales</taxon>
        <taxon>Papillomaviridae</taxon>
        <taxon>Firstpapillomavirinae</taxon>
        <taxon>Betapapillomavirus</taxon>
        <taxon>Betapapillomavirus 2</taxon>
    </lineage>
</organism>
<reference key="1">
    <citation type="submission" date="1995-10" db="EMBL/GenBank/DDBJ databases">
        <authorList>
            <person name="Delius H."/>
        </authorList>
    </citation>
    <scope>NUCLEOTIDE SEQUENCE [GENOMIC DNA]</scope>
</reference>
<reference key="2">
    <citation type="journal article" date="1995" name="J. Virol.">
        <title>Analysis of genomic sequences of 95 papillomavirus types: uniting typing, phylogeny, and taxonomy.</title>
        <authorList>
            <person name="Chan S.-Y."/>
            <person name="Delius H."/>
            <person name="Halpern A.L."/>
            <person name="Bernard H.U."/>
        </authorList>
    </citation>
    <scope>NUCLEOTIDE SEQUENCE [GENOMIC DNA] OF 373-468</scope>
</reference>
<name>VL1_HPV38</name>
<sequence>MTLWLPASGKIYLPPTPPVARVQSTDEYVERTDIYYHATSDRLLTVGHPYFDVRSQDGQKIEVPKVSGNQYRSFRVTFPDPNKFALADMSVYDPDKYRLVWACKGLEIGRGQPLGVGTTGHPLFNKVRDTENSSNYQNTSTDDRQNTSFDPKQVQMFIIGCTPCLGEYWDKAPVCDNAGDQTGLCPPLELKNSVIEDGDMFDIGFGNINNKTLSFNRSDVSLDIVNETCKYPDFLTMSNDVYGDSCFFFVRREQCYARHYFVRGGAVGDAIPDGTVNQNHNYYLPAKNGQGQRTLGNSTYFPTVSGSLVTSDAQLFNRPFWLQRAQGHNNGILWGNQMFVTVADNTRNTNFTISVSTENGGAQEYDSANIREYLRHVEEYQLSFILQLCKVPLNAEVLTQINAMNSGILENWQLGFVPTPDNSVHDTYRYITSKATKCPDAVPETEKEDPFGQYTFWNVDMTEKLSLDLDQYPLGRKFLFQAGLQTARTRAVKRPLVRKSSKSVKRKRTQ</sequence>
<gene>
    <name evidence="1" type="primary">L1</name>
</gene>
<dbReference type="EMBL" id="U31787">
    <property type="protein sequence ID" value="AAA79456.1"/>
    <property type="molecule type" value="Genomic_DNA"/>
</dbReference>
<dbReference type="EMBL" id="U21875">
    <property type="protein sequence ID" value="AAA92836.1"/>
    <property type="molecule type" value="Genomic_DNA"/>
</dbReference>
<dbReference type="SMR" id="P50814"/>
<dbReference type="Proteomes" id="UP000009166">
    <property type="component" value="Genome"/>
</dbReference>
<dbReference type="GO" id="GO:0042025">
    <property type="term" value="C:host cell nucleus"/>
    <property type="evidence" value="ECO:0007669"/>
    <property type="project" value="UniProtKB-SubCell"/>
</dbReference>
<dbReference type="GO" id="GO:0039620">
    <property type="term" value="C:T=7 icosahedral viral capsid"/>
    <property type="evidence" value="ECO:0007669"/>
    <property type="project" value="UniProtKB-UniRule"/>
</dbReference>
<dbReference type="GO" id="GO:0005198">
    <property type="term" value="F:structural molecule activity"/>
    <property type="evidence" value="ECO:0007669"/>
    <property type="project" value="UniProtKB-UniRule"/>
</dbReference>
<dbReference type="GO" id="GO:0075509">
    <property type="term" value="P:endocytosis involved in viral entry into host cell"/>
    <property type="evidence" value="ECO:0007669"/>
    <property type="project" value="UniProtKB-KW"/>
</dbReference>
<dbReference type="GO" id="GO:0019062">
    <property type="term" value="P:virion attachment to host cell"/>
    <property type="evidence" value="ECO:0007669"/>
    <property type="project" value="UniProtKB-UniRule"/>
</dbReference>
<dbReference type="Gene3D" id="2.60.175.20">
    <property type="entry name" value="Major capsid L1 (late) superfamily, Papillomavirus"/>
    <property type="match status" value="2"/>
</dbReference>
<dbReference type="HAMAP" id="MF_04002">
    <property type="entry name" value="PPV_L1"/>
    <property type="match status" value="1"/>
</dbReference>
<dbReference type="InterPro" id="IPR002210">
    <property type="entry name" value="Capsid_L1_Papillomavir"/>
</dbReference>
<dbReference type="InterPro" id="IPR036973">
    <property type="entry name" value="Capsid_L1_sf_Papillomavir"/>
</dbReference>
<dbReference type="InterPro" id="IPR011222">
    <property type="entry name" value="dsDNA_vir_gr_I_capsid"/>
</dbReference>
<dbReference type="Pfam" id="PF00500">
    <property type="entry name" value="Late_protein_L1"/>
    <property type="match status" value="1"/>
</dbReference>
<dbReference type="PRINTS" id="PR00865">
    <property type="entry name" value="HPVCAPSIDL1"/>
</dbReference>
<dbReference type="SUPFAM" id="SSF88648">
    <property type="entry name" value="Group I dsDNA viruses"/>
    <property type="match status" value="1"/>
</dbReference>
<evidence type="ECO:0000255" key="1">
    <source>
        <dbReference type="HAMAP-Rule" id="MF_04002"/>
    </source>
</evidence>
<evidence type="ECO:0000256" key="2">
    <source>
        <dbReference type="SAM" id="MobiDB-lite"/>
    </source>
</evidence>
<evidence type="ECO:0000305" key="3"/>
<feature type="chain" id="PRO_0000133522" description="Major capsid protein L1">
    <location>
        <begin position="1"/>
        <end position="510"/>
    </location>
</feature>
<feature type="region of interest" description="Disordered" evidence="2">
    <location>
        <begin position="128"/>
        <end position="147"/>
    </location>
</feature>
<feature type="compositionally biased region" description="Polar residues" evidence="2">
    <location>
        <begin position="132"/>
        <end position="147"/>
    </location>
</feature>
<feature type="disulfide bond" description="Interchain (with C-438)" evidence="1">
    <location>
        <position position="175"/>
    </location>
</feature>
<feature type="disulfide bond" description="Interchain (with C-175)" evidence="1">
    <location>
        <position position="438"/>
    </location>
</feature>
<feature type="sequence conflict" description="In Ref. 2; AAA92836." evidence="3" ref="2">
    <original>T</original>
    <variation>A</variation>
    <location>
        <position position="419"/>
    </location>
</feature>
<organismHost>
    <name type="scientific">Homo sapiens</name>
    <name type="common">Human</name>
    <dbReference type="NCBI Taxonomy" id="9606"/>
</organismHost>
<keyword id="KW-0167">Capsid protein</keyword>
<keyword id="KW-1015">Disulfide bond</keyword>
<keyword id="KW-1048">Host nucleus</keyword>
<keyword id="KW-0945">Host-virus interaction</keyword>
<keyword id="KW-0426">Late protein</keyword>
<keyword id="KW-1145">T=7 icosahedral capsid protein</keyword>
<keyword id="KW-1161">Viral attachment to host cell</keyword>
<keyword id="KW-1162">Viral penetration into host cytoplasm</keyword>
<keyword id="KW-0946">Virion</keyword>
<keyword id="KW-1164">Virus endocytosis by host</keyword>
<keyword id="KW-1160">Virus entry into host cell</keyword>
<comment type="function">
    <text evidence="1">Forms an icosahedral capsid with a T=7 symmetry and a 50 nm diameter. The capsid is composed of 72 pentamers linked to each other by disulfide bonds and associated with L2 proteins. Binds to heparan sulfate proteoglycans on cell surface of basal layer keratinocytes to provide initial virion attachment. This binding mediates a conformational change in the virus capsid that facilitates efficient infection. The virion enters the host cell via endocytosis. During virus trafficking, L1 protein dissociates from the viral DNA and the genomic DNA is released to the host nucleus. The virion assembly takes place within the cell nucleus. Encapsulates the genomic DNA together with protein L2.</text>
</comment>
<comment type="subunit">
    <text evidence="1">Self-assembles into homopentamers. The capsid has an icosahedral symmetry and consists of 72 capsomers, with each capsomer being a pentamer of L1. Interacts with the minor capsid protein L2; this interaction is necessary for viral genome encapsidation. Interacts with protein E2; this interaction enhances E2-dependent replication and transcription activation.</text>
</comment>
<comment type="subcellular location">
    <subcellularLocation>
        <location evidence="1">Virion</location>
    </subcellularLocation>
    <subcellularLocation>
        <location evidence="1">Host nucleus</location>
    </subcellularLocation>
</comment>
<comment type="similarity">
    <text evidence="1">Belongs to the papillomaviridae L1 protein family.</text>
</comment>
<protein>
    <recommendedName>
        <fullName evidence="1">Major capsid protein L1</fullName>
    </recommendedName>
</protein>